<protein>
    <recommendedName>
        <fullName evidence="2">Adenylosuccinate synthetase</fullName>
        <shortName evidence="2">AMPSase</shortName>
        <shortName evidence="2">AdSS</shortName>
        <ecNumber evidence="2">6.3.4.4</ecNumber>
    </recommendedName>
    <alternativeName>
        <fullName evidence="2">IMP--aspartate ligase</fullName>
    </alternativeName>
</protein>
<keyword id="KW-0963">Cytoplasm</keyword>
<keyword id="KW-0342">GTP-binding</keyword>
<keyword id="KW-0436">Ligase</keyword>
<keyword id="KW-0460">Magnesium</keyword>
<keyword id="KW-0479">Metal-binding</keyword>
<keyword id="KW-0547">Nucleotide-binding</keyword>
<keyword id="KW-0658">Purine biosynthesis</keyword>
<keyword id="KW-1185">Reference proteome</keyword>
<feature type="chain" id="PRO_0000399268" description="Adenylosuccinate synthetase">
    <location>
        <begin position="1"/>
        <end position="435"/>
    </location>
</feature>
<feature type="active site" description="Proton acceptor" evidence="2">
    <location>
        <position position="20"/>
    </location>
</feature>
<feature type="active site" description="Proton donor" evidence="2">
    <location>
        <position position="50"/>
    </location>
</feature>
<feature type="binding site" evidence="2">
    <location>
        <begin position="19"/>
        <end position="25"/>
    </location>
    <ligand>
        <name>GTP</name>
        <dbReference type="ChEBI" id="CHEBI:37565"/>
    </ligand>
</feature>
<feature type="binding site" description="in other chain" evidence="2">
    <location>
        <begin position="20"/>
        <end position="23"/>
    </location>
    <ligand>
        <name>IMP</name>
        <dbReference type="ChEBI" id="CHEBI:58053"/>
        <note>ligand shared between dimeric partners</note>
    </ligand>
</feature>
<feature type="binding site" evidence="2">
    <location>
        <position position="20"/>
    </location>
    <ligand>
        <name>Mg(2+)</name>
        <dbReference type="ChEBI" id="CHEBI:18420"/>
    </ligand>
</feature>
<feature type="binding site" description="in other chain" evidence="2">
    <location>
        <begin position="47"/>
        <end position="50"/>
    </location>
    <ligand>
        <name>IMP</name>
        <dbReference type="ChEBI" id="CHEBI:58053"/>
        <note>ligand shared between dimeric partners</note>
    </ligand>
</feature>
<feature type="binding site" evidence="2">
    <location>
        <begin position="49"/>
        <end position="51"/>
    </location>
    <ligand>
        <name>GTP</name>
        <dbReference type="ChEBI" id="CHEBI:37565"/>
    </ligand>
</feature>
<feature type="binding site" evidence="2">
    <location>
        <position position="49"/>
    </location>
    <ligand>
        <name>Mg(2+)</name>
        <dbReference type="ChEBI" id="CHEBI:18420"/>
    </ligand>
</feature>
<feature type="binding site" description="in other chain" evidence="2">
    <location>
        <position position="139"/>
    </location>
    <ligand>
        <name>IMP</name>
        <dbReference type="ChEBI" id="CHEBI:58053"/>
        <note>ligand shared between dimeric partners</note>
    </ligand>
</feature>
<feature type="binding site" evidence="2">
    <location>
        <position position="153"/>
    </location>
    <ligand>
        <name>IMP</name>
        <dbReference type="ChEBI" id="CHEBI:58053"/>
        <note>ligand shared between dimeric partners</note>
    </ligand>
</feature>
<feature type="binding site" description="in other chain" evidence="2">
    <location>
        <position position="233"/>
    </location>
    <ligand>
        <name>IMP</name>
        <dbReference type="ChEBI" id="CHEBI:58053"/>
        <note>ligand shared between dimeric partners</note>
    </ligand>
</feature>
<feature type="binding site" description="in other chain" evidence="2">
    <location>
        <position position="248"/>
    </location>
    <ligand>
        <name>IMP</name>
        <dbReference type="ChEBI" id="CHEBI:58053"/>
        <note>ligand shared between dimeric partners</note>
    </ligand>
</feature>
<feature type="binding site" evidence="2">
    <location>
        <begin position="308"/>
        <end position="314"/>
    </location>
    <ligand>
        <name>substrate</name>
    </ligand>
</feature>
<feature type="binding site" description="in other chain" evidence="2">
    <location>
        <position position="312"/>
    </location>
    <ligand>
        <name>IMP</name>
        <dbReference type="ChEBI" id="CHEBI:58053"/>
        <note>ligand shared between dimeric partners</note>
    </ligand>
</feature>
<feature type="binding site" evidence="2">
    <location>
        <position position="314"/>
    </location>
    <ligand>
        <name>GTP</name>
        <dbReference type="ChEBI" id="CHEBI:37565"/>
    </ligand>
</feature>
<feature type="binding site" evidence="2">
    <location>
        <begin position="340"/>
        <end position="342"/>
    </location>
    <ligand>
        <name>GTP</name>
        <dbReference type="ChEBI" id="CHEBI:37565"/>
    </ligand>
</feature>
<feature type="binding site" evidence="2">
    <location>
        <begin position="422"/>
        <end position="424"/>
    </location>
    <ligand>
        <name>GTP</name>
        <dbReference type="ChEBI" id="CHEBI:37565"/>
    </ligand>
</feature>
<name>PURA_BRUMA</name>
<comment type="function">
    <text evidence="1">Plays an important role in the de novo pathway and in the salvage pathway of purine nucleotide biosynthesis. Catalyzes the first committed step in the biosynthesis of AMP from IMP (By similarity).</text>
</comment>
<comment type="catalytic activity">
    <reaction evidence="2">
        <text>IMP + L-aspartate + GTP = N(6)-(1,2-dicarboxyethyl)-AMP + GDP + phosphate + 2 H(+)</text>
        <dbReference type="Rhea" id="RHEA:15753"/>
        <dbReference type="ChEBI" id="CHEBI:15378"/>
        <dbReference type="ChEBI" id="CHEBI:29991"/>
        <dbReference type="ChEBI" id="CHEBI:37565"/>
        <dbReference type="ChEBI" id="CHEBI:43474"/>
        <dbReference type="ChEBI" id="CHEBI:57567"/>
        <dbReference type="ChEBI" id="CHEBI:58053"/>
        <dbReference type="ChEBI" id="CHEBI:58189"/>
        <dbReference type="EC" id="6.3.4.4"/>
    </reaction>
</comment>
<comment type="cofactor">
    <cofactor evidence="2">
        <name>Mg(2+)</name>
        <dbReference type="ChEBI" id="CHEBI:18420"/>
    </cofactor>
    <text evidence="2">Binds 1 Mg(2+) ion per subunit.</text>
</comment>
<comment type="pathway">
    <text evidence="2">Purine metabolism; AMP biosynthesis via de novo pathway; AMP from IMP: step 1/2.</text>
</comment>
<comment type="subunit">
    <text evidence="2">Homodimer.</text>
</comment>
<comment type="subcellular location">
    <subcellularLocation>
        <location evidence="2">Cytoplasm</location>
    </subcellularLocation>
</comment>
<comment type="similarity">
    <text evidence="2">Belongs to the adenylosuccinate synthetase family.</text>
</comment>
<dbReference type="EC" id="6.3.4.4" evidence="2"/>
<dbReference type="EMBL" id="DS239431">
    <property type="protein sequence ID" value="EDP29166.1"/>
    <property type="molecule type" value="Genomic_DNA"/>
</dbReference>
<dbReference type="SMR" id="A8QE42"/>
<dbReference type="FunCoup" id="A8QE42">
    <property type="interactions" value="1759"/>
</dbReference>
<dbReference type="STRING" id="6279.A8QE42"/>
<dbReference type="EnsemblMetazoa" id="Bm13838b.1">
    <property type="protein sequence ID" value="Bm13838b.1"/>
    <property type="gene ID" value="WBGene00234099"/>
</dbReference>
<dbReference type="GeneID" id="6105024"/>
<dbReference type="KEGG" id="bmy:BM_BM13838"/>
<dbReference type="CTD" id="6105024"/>
<dbReference type="WormBase" id="Bm13838a">
    <property type="protein sequence ID" value="BM23976"/>
    <property type="gene ID" value="WBGene00234099"/>
</dbReference>
<dbReference type="HOGENOM" id="CLU_029848_0_0_1"/>
<dbReference type="InParanoid" id="A8QE42"/>
<dbReference type="OrthoDB" id="10265645at2759"/>
<dbReference type="UniPathway" id="UPA00075">
    <property type="reaction ID" value="UER00335"/>
</dbReference>
<dbReference type="Proteomes" id="UP000006672">
    <property type="component" value="Unassembled WGS sequence"/>
</dbReference>
<dbReference type="GO" id="GO:0005737">
    <property type="term" value="C:cytoplasm"/>
    <property type="evidence" value="ECO:0007669"/>
    <property type="project" value="UniProtKB-SubCell"/>
</dbReference>
<dbReference type="GO" id="GO:0004019">
    <property type="term" value="F:adenylosuccinate synthase activity"/>
    <property type="evidence" value="ECO:0007669"/>
    <property type="project" value="UniProtKB-UniRule"/>
</dbReference>
<dbReference type="GO" id="GO:0005525">
    <property type="term" value="F:GTP binding"/>
    <property type="evidence" value="ECO:0007669"/>
    <property type="project" value="UniProtKB-UniRule"/>
</dbReference>
<dbReference type="GO" id="GO:0000287">
    <property type="term" value="F:magnesium ion binding"/>
    <property type="evidence" value="ECO:0007669"/>
    <property type="project" value="UniProtKB-UniRule"/>
</dbReference>
<dbReference type="GO" id="GO:0044208">
    <property type="term" value="P:'de novo' AMP biosynthetic process"/>
    <property type="evidence" value="ECO:0007669"/>
    <property type="project" value="UniProtKB-UniRule"/>
</dbReference>
<dbReference type="GO" id="GO:0046040">
    <property type="term" value="P:IMP metabolic process"/>
    <property type="evidence" value="ECO:0007669"/>
    <property type="project" value="TreeGrafter"/>
</dbReference>
<dbReference type="CDD" id="cd03108">
    <property type="entry name" value="AdSS"/>
    <property type="match status" value="1"/>
</dbReference>
<dbReference type="FunFam" id="3.90.170.10:FF:000001">
    <property type="entry name" value="Adenylosuccinate synthetase"/>
    <property type="match status" value="1"/>
</dbReference>
<dbReference type="FunFam" id="1.10.300.10:FF:000002">
    <property type="entry name" value="Adenylosuccinate synthetase, chloroplastic"/>
    <property type="match status" value="1"/>
</dbReference>
<dbReference type="Gene3D" id="3.40.440.10">
    <property type="entry name" value="Adenylosuccinate Synthetase, subunit A, domain 1"/>
    <property type="match status" value="1"/>
</dbReference>
<dbReference type="Gene3D" id="1.10.300.10">
    <property type="entry name" value="Adenylosuccinate Synthetase, subunit A, domain 2"/>
    <property type="match status" value="1"/>
</dbReference>
<dbReference type="Gene3D" id="3.90.170.10">
    <property type="entry name" value="Adenylosuccinate Synthetase, subunit A, domain 3"/>
    <property type="match status" value="1"/>
</dbReference>
<dbReference type="HAMAP" id="MF_00011">
    <property type="entry name" value="Adenylosucc_synth"/>
    <property type="match status" value="1"/>
</dbReference>
<dbReference type="InterPro" id="IPR018220">
    <property type="entry name" value="Adenylosuccin_syn_GTP-bd"/>
</dbReference>
<dbReference type="InterPro" id="IPR033128">
    <property type="entry name" value="Adenylosuccin_syn_Lys_AS"/>
</dbReference>
<dbReference type="InterPro" id="IPR042109">
    <property type="entry name" value="Adenylosuccinate_synth_dom1"/>
</dbReference>
<dbReference type="InterPro" id="IPR042110">
    <property type="entry name" value="Adenylosuccinate_synth_dom2"/>
</dbReference>
<dbReference type="InterPro" id="IPR042111">
    <property type="entry name" value="Adenylosuccinate_synth_dom3"/>
</dbReference>
<dbReference type="InterPro" id="IPR001114">
    <property type="entry name" value="Adenylosuccinate_synthetase"/>
</dbReference>
<dbReference type="InterPro" id="IPR027417">
    <property type="entry name" value="P-loop_NTPase"/>
</dbReference>
<dbReference type="NCBIfam" id="NF002223">
    <property type="entry name" value="PRK01117.1"/>
    <property type="match status" value="1"/>
</dbReference>
<dbReference type="NCBIfam" id="TIGR00184">
    <property type="entry name" value="purA"/>
    <property type="match status" value="1"/>
</dbReference>
<dbReference type="PANTHER" id="PTHR11846">
    <property type="entry name" value="ADENYLOSUCCINATE SYNTHETASE"/>
    <property type="match status" value="1"/>
</dbReference>
<dbReference type="PANTHER" id="PTHR11846:SF0">
    <property type="entry name" value="ADENYLOSUCCINATE SYNTHETASE"/>
    <property type="match status" value="1"/>
</dbReference>
<dbReference type="Pfam" id="PF00709">
    <property type="entry name" value="Adenylsucc_synt"/>
    <property type="match status" value="1"/>
</dbReference>
<dbReference type="SMART" id="SM00788">
    <property type="entry name" value="Adenylsucc_synt"/>
    <property type="match status" value="1"/>
</dbReference>
<dbReference type="SUPFAM" id="SSF52540">
    <property type="entry name" value="P-loop containing nucleoside triphosphate hydrolases"/>
    <property type="match status" value="1"/>
</dbReference>
<dbReference type="PROSITE" id="PS01266">
    <property type="entry name" value="ADENYLOSUCCIN_SYN_1"/>
    <property type="match status" value="1"/>
</dbReference>
<dbReference type="PROSITE" id="PS00513">
    <property type="entry name" value="ADENYLOSUCCIN_SYN_2"/>
    <property type="match status" value="1"/>
</dbReference>
<gene>
    <name type="ORF">Bm1_50695</name>
</gene>
<accession>A8QE42</accession>
<organism>
    <name type="scientific">Brugia malayi</name>
    <name type="common">Filarial nematode worm</name>
    <dbReference type="NCBI Taxonomy" id="6279"/>
    <lineage>
        <taxon>Eukaryota</taxon>
        <taxon>Metazoa</taxon>
        <taxon>Ecdysozoa</taxon>
        <taxon>Nematoda</taxon>
        <taxon>Chromadorea</taxon>
        <taxon>Rhabditida</taxon>
        <taxon>Spirurina</taxon>
        <taxon>Spiruromorpha</taxon>
        <taxon>Filarioidea</taxon>
        <taxon>Onchocercidae</taxon>
        <taxon>Brugia</taxon>
    </lineage>
</organism>
<reference key="1">
    <citation type="journal article" date="2007" name="Science">
        <title>Draft genome of the filarial nematode parasite Brugia malayi.</title>
        <authorList>
            <person name="Ghedin E."/>
            <person name="Wang S."/>
            <person name="Spiro D."/>
            <person name="Caler E."/>
            <person name="Zhao Q."/>
            <person name="Crabtree J."/>
            <person name="Allen J.E."/>
            <person name="Delcher A.L."/>
            <person name="Guiliano D.B."/>
            <person name="Miranda-Saavedra D."/>
            <person name="Angiuoli S.V."/>
            <person name="Creasy T."/>
            <person name="Amedeo P."/>
            <person name="Haas B."/>
            <person name="El-Sayed N.M."/>
            <person name="Wortman J.R."/>
            <person name="Feldblyum T."/>
            <person name="Tallon L."/>
            <person name="Schatz M."/>
            <person name="Shumway M."/>
            <person name="Koo H."/>
            <person name="Salzberg S.L."/>
            <person name="Schobel S."/>
            <person name="Pertea M."/>
            <person name="Pop M."/>
            <person name="White O."/>
            <person name="Barton G.J."/>
            <person name="Carlow C.K.S."/>
            <person name="Crawford M.J."/>
            <person name="Daub J."/>
            <person name="Dimmic M.W."/>
            <person name="Estes C.F."/>
            <person name="Foster J.M."/>
            <person name="Ganatra M."/>
            <person name="Gregory W.F."/>
            <person name="Johnson N.M."/>
            <person name="Jin J."/>
            <person name="Komuniecki R."/>
            <person name="Korf I."/>
            <person name="Kumar S."/>
            <person name="Laney S."/>
            <person name="Li B.-W."/>
            <person name="Li W."/>
            <person name="Lindblom T.H."/>
            <person name="Lustigman S."/>
            <person name="Ma D."/>
            <person name="Maina C.V."/>
            <person name="Martin D.M."/>
            <person name="McCarter J.P."/>
            <person name="McReynolds L."/>
            <person name="Mitreva M."/>
            <person name="Nutman T.B."/>
            <person name="Parkinson J."/>
            <person name="Peregrin-Alvarez J.M."/>
            <person name="Poole C."/>
            <person name="Ren Q."/>
            <person name="Saunders L."/>
            <person name="Sluder A.E."/>
            <person name="Smith K."/>
            <person name="Stanke M."/>
            <person name="Unnasch T.R."/>
            <person name="Ware J."/>
            <person name="Wei A.D."/>
            <person name="Weil G."/>
            <person name="Williams D.J."/>
            <person name="Zhang Y."/>
            <person name="Williams S.A."/>
            <person name="Fraser-Liggett C."/>
            <person name="Slatko B."/>
            <person name="Blaxter M.L."/>
            <person name="Scott A.L."/>
        </authorList>
    </citation>
    <scope>NUCLEOTIDE SEQUENCE [LARGE SCALE GENOMIC DNA]</scope>
</reference>
<evidence type="ECO:0000250" key="1"/>
<evidence type="ECO:0000255" key="2">
    <source>
        <dbReference type="HAMAP-Rule" id="MF_03125"/>
    </source>
</evidence>
<sequence length="435" mass="48481">MLKEQPKGTVTVLLGAQWGDEGKGKIVDYLIAKDKVQVVARCQGGNNAGHTVVANGRKYDFHIIPSGIIAEKCFNIIGNGTVVNLDSFFEELDHNKITNIPGWEKRILISDRAHLICDIHMLVDGHSEDRLNINKIGTTKKGIGPTYSSKCFRNGLRVGDLVYDFDGFTLKFRELVKYYQKQYPDLEIDVDLELIKFKKHANKLNELALVADTVITLDELRSSGKTVLVEGANGTMLDIDFGTYPFVTSSNATVGGAITGLGLPPMSIKRVIGVTKAYSTRVGSGPFPTELKNDIGDKLQRIGHEVGVTTGRKRRCGWIDLVLLKRAHLINGFTDIALTKLDVLDTFDVIKAGVAYRLDKELLKSPPSQASDWEKVEVEYRTFKGWNTPILAMRSFNELPENCRIFIEFIEQYVGVPVKWIGVGEEREALILREP</sequence>
<proteinExistence type="inferred from homology"/>